<keyword id="KW-0963">Cytoplasm</keyword>
<keyword id="KW-0238">DNA-binding</keyword>
<keyword id="KW-0804">Transcription</keyword>
<keyword id="KW-0805">Transcription regulation</keyword>
<feature type="chain" id="PRO_1000132214" description="Probable transcriptional regulatory protein M446_6579">
    <location>
        <begin position="1"/>
        <end position="248"/>
    </location>
</feature>
<evidence type="ECO:0000255" key="1">
    <source>
        <dbReference type="HAMAP-Rule" id="MF_00693"/>
    </source>
</evidence>
<gene>
    <name type="ordered locus">M446_6579</name>
</gene>
<protein>
    <recommendedName>
        <fullName evidence="1">Probable transcriptional regulatory protein M446_6579</fullName>
    </recommendedName>
</protein>
<comment type="subcellular location">
    <subcellularLocation>
        <location evidence="1">Cytoplasm</location>
    </subcellularLocation>
</comment>
<comment type="similarity">
    <text evidence="1">Belongs to the TACO1 family.</text>
</comment>
<name>Y6579_METS4</name>
<dbReference type="EMBL" id="CP000943">
    <property type="protein sequence ID" value="ACA20835.1"/>
    <property type="molecule type" value="Genomic_DNA"/>
</dbReference>
<dbReference type="RefSeq" id="WP_012336211.1">
    <property type="nucleotide sequence ID" value="NC_010511.1"/>
</dbReference>
<dbReference type="SMR" id="B0UD14"/>
<dbReference type="STRING" id="426117.M446_6579"/>
<dbReference type="KEGG" id="met:M446_6579"/>
<dbReference type="eggNOG" id="COG0217">
    <property type="taxonomic scope" value="Bacteria"/>
</dbReference>
<dbReference type="HOGENOM" id="CLU_062974_2_2_5"/>
<dbReference type="GO" id="GO:0005829">
    <property type="term" value="C:cytosol"/>
    <property type="evidence" value="ECO:0007669"/>
    <property type="project" value="TreeGrafter"/>
</dbReference>
<dbReference type="GO" id="GO:0003677">
    <property type="term" value="F:DNA binding"/>
    <property type="evidence" value="ECO:0007669"/>
    <property type="project" value="UniProtKB-UniRule"/>
</dbReference>
<dbReference type="GO" id="GO:0006355">
    <property type="term" value="P:regulation of DNA-templated transcription"/>
    <property type="evidence" value="ECO:0007669"/>
    <property type="project" value="UniProtKB-UniRule"/>
</dbReference>
<dbReference type="FunFam" id="1.10.10.200:FF:000002">
    <property type="entry name" value="Probable transcriptional regulatory protein CLM62_37755"/>
    <property type="match status" value="1"/>
</dbReference>
<dbReference type="Gene3D" id="1.10.10.200">
    <property type="match status" value="1"/>
</dbReference>
<dbReference type="Gene3D" id="3.30.70.980">
    <property type="match status" value="2"/>
</dbReference>
<dbReference type="HAMAP" id="MF_00693">
    <property type="entry name" value="Transcrip_reg_TACO1"/>
    <property type="match status" value="1"/>
</dbReference>
<dbReference type="InterPro" id="IPR017856">
    <property type="entry name" value="Integrase-like_N"/>
</dbReference>
<dbReference type="InterPro" id="IPR048300">
    <property type="entry name" value="TACO1_YebC-like_2nd/3rd_dom"/>
</dbReference>
<dbReference type="InterPro" id="IPR049083">
    <property type="entry name" value="TACO1_YebC_N"/>
</dbReference>
<dbReference type="InterPro" id="IPR002876">
    <property type="entry name" value="Transcrip_reg_TACO1-like"/>
</dbReference>
<dbReference type="InterPro" id="IPR026564">
    <property type="entry name" value="Transcrip_reg_TACO1-like_dom3"/>
</dbReference>
<dbReference type="InterPro" id="IPR029072">
    <property type="entry name" value="YebC-like"/>
</dbReference>
<dbReference type="NCBIfam" id="NF001030">
    <property type="entry name" value="PRK00110.1"/>
    <property type="match status" value="1"/>
</dbReference>
<dbReference type="NCBIfam" id="NF009044">
    <property type="entry name" value="PRK12378.1"/>
    <property type="match status" value="1"/>
</dbReference>
<dbReference type="NCBIfam" id="TIGR01033">
    <property type="entry name" value="YebC/PmpR family DNA-binding transcriptional regulator"/>
    <property type="match status" value="1"/>
</dbReference>
<dbReference type="PANTHER" id="PTHR12532:SF6">
    <property type="entry name" value="TRANSCRIPTIONAL REGULATORY PROTEIN YEBC-RELATED"/>
    <property type="match status" value="1"/>
</dbReference>
<dbReference type="PANTHER" id="PTHR12532">
    <property type="entry name" value="TRANSLATIONAL ACTIVATOR OF CYTOCHROME C OXIDASE 1"/>
    <property type="match status" value="1"/>
</dbReference>
<dbReference type="Pfam" id="PF20772">
    <property type="entry name" value="TACO1_YebC_N"/>
    <property type="match status" value="1"/>
</dbReference>
<dbReference type="Pfam" id="PF01709">
    <property type="entry name" value="Transcrip_reg"/>
    <property type="match status" value="1"/>
</dbReference>
<dbReference type="SUPFAM" id="SSF75625">
    <property type="entry name" value="YebC-like"/>
    <property type="match status" value="1"/>
</dbReference>
<proteinExistence type="inferred from homology"/>
<sequence length="248" mass="26839">MAGHSQFKNIMHRKGRVDAVRSKVFGKLAREITVAAKLGVPDPAMNPRLRAAMLAARAENMPKDNIERAIKKATGGEGENYEEIRYEGYGPGGAALIVEAQTDNRNRTASDVRSAFTKAGGSLAETGAVSFMFDRVGLVAFDAKVADADAMLEAAIEAGADDVKSDESGHEVTCEHGALGEVAKALEARFGEPRRTALVWRPQNTVEVDDETGEKLIRLVEMIEDQDDVQNVFVNFAVSDALMARMQD</sequence>
<organism>
    <name type="scientific">Methylobacterium sp. (strain 4-46)</name>
    <dbReference type="NCBI Taxonomy" id="426117"/>
    <lineage>
        <taxon>Bacteria</taxon>
        <taxon>Pseudomonadati</taxon>
        <taxon>Pseudomonadota</taxon>
        <taxon>Alphaproteobacteria</taxon>
        <taxon>Hyphomicrobiales</taxon>
        <taxon>Methylobacteriaceae</taxon>
        <taxon>Methylobacterium</taxon>
    </lineage>
</organism>
<reference key="1">
    <citation type="submission" date="2008-02" db="EMBL/GenBank/DDBJ databases">
        <title>Complete sequence of chromosome of Methylobacterium sp. 4-46.</title>
        <authorList>
            <consortium name="US DOE Joint Genome Institute"/>
            <person name="Copeland A."/>
            <person name="Lucas S."/>
            <person name="Lapidus A."/>
            <person name="Glavina del Rio T."/>
            <person name="Dalin E."/>
            <person name="Tice H."/>
            <person name="Bruce D."/>
            <person name="Goodwin L."/>
            <person name="Pitluck S."/>
            <person name="Chertkov O."/>
            <person name="Brettin T."/>
            <person name="Detter J.C."/>
            <person name="Han C."/>
            <person name="Kuske C.R."/>
            <person name="Schmutz J."/>
            <person name="Larimer F."/>
            <person name="Land M."/>
            <person name="Hauser L."/>
            <person name="Kyrpides N."/>
            <person name="Ivanova N."/>
            <person name="Marx C.J."/>
            <person name="Richardson P."/>
        </authorList>
    </citation>
    <scope>NUCLEOTIDE SEQUENCE [LARGE SCALE GENOMIC DNA]</scope>
    <source>
        <strain>4-46</strain>
    </source>
</reference>
<accession>B0UD14</accession>